<comment type="function">
    <text evidence="1">Component of the proteasome core, a large protease complex with broad specificity involved in protein degradation.</text>
</comment>
<comment type="catalytic activity">
    <reaction evidence="1">
        <text>Cleavage of peptide bonds with very broad specificity.</text>
        <dbReference type="EC" id="3.4.25.1"/>
    </reaction>
</comment>
<comment type="activity regulation">
    <text evidence="1">The formation of the proteasomal ATPase ARC-20S proteasome complex, likely via the docking of the C-termini of ARC into the intersubunit pockets in the alpha-rings, may trigger opening of the gate for substrate entry. Interconversion between the open-gate and close-gate conformations leads to a dynamic regulation of the 20S proteasome proteolysis activity.</text>
</comment>
<comment type="pathway">
    <text evidence="1">Protein degradation; proteasomal Pup-dependent pathway.</text>
</comment>
<comment type="subunit">
    <text evidence="1">The 20S proteasome core is composed of 14 alpha and 14 beta subunits that assemble into four stacked heptameric rings, resulting in a barrel-shaped structure. The two inner rings, each composed of seven catalytic beta subunits, are sandwiched by two outer rings, each composed of seven alpha subunits. The catalytic chamber with the active sites is on the inside of the barrel. Has a gated structure, the ends of the cylinder being occluded by the N-termini of the alpha-subunits. Is capped by the proteasome-associated ATPase, ARC.</text>
</comment>
<comment type="subcellular location">
    <subcellularLocation>
        <location evidence="1">Cytoplasm</location>
    </subcellularLocation>
</comment>
<comment type="similarity">
    <text evidence="1">Belongs to the peptidase T1B family.</text>
</comment>
<proteinExistence type="inferred from homology"/>
<name>PSB_MYCSK</name>
<evidence type="ECO:0000255" key="1">
    <source>
        <dbReference type="HAMAP-Rule" id="MF_02113"/>
    </source>
</evidence>
<keyword id="KW-0068">Autocatalytic cleavage</keyword>
<keyword id="KW-0963">Cytoplasm</keyword>
<keyword id="KW-0378">Hydrolase</keyword>
<keyword id="KW-0645">Protease</keyword>
<keyword id="KW-0647">Proteasome</keyword>
<keyword id="KW-0888">Threonine protease</keyword>
<keyword id="KW-0865">Zymogen</keyword>
<feature type="propeptide" id="PRO_0000397542" description="Removed in mature form; by autocatalysis" evidence="1">
    <location>
        <begin position="1"/>
        <end position="65"/>
    </location>
</feature>
<feature type="chain" id="PRO_0000397543" description="Proteasome subunit beta">
    <location>
        <begin position="66"/>
        <end position="304"/>
    </location>
</feature>
<feature type="active site" description="Nucleophile" evidence="1">
    <location>
        <position position="66"/>
    </location>
</feature>
<gene>
    <name evidence="1" type="primary">prcB</name>
    <name type="ordered locus">Mkms_3191</name>
</gene>
<organism>
    <name type="scientific">Mycobacterium sp. (strain KMS)</name>
    <dbReference type="NCBI Taxonomy" id="189918"/>
    <lineage>
        <taxon>Bacteria</taxon>
        <taxon>Bacillati</taxon>
        <taxon>Actinomycetota</taxon>
        <taxon>Actinomycetes</taxon>
        <taxon>Mycobacteriales</taxon>
        <taxon>Mycobacteriaceae</taxon>
        <taxon>Mycobacterium</taxon>
    </lineage>
</organism>
<protein>
    <recommendedName>
        <fullName evidence="1">Proteasome subunit beta</fullName>
        <ecNumber evidence="1">3.4.25.1</ecNumber>
    </recommendedName>
    <alternativeName>
        <fullName evidence="1">20S proteasome beta subunit</fullName>
    </alternativeName>
    <alternativeName>
        <fullName evidence="1">Proteasome core protein PrcB</fullName>
    </alternativeName>
</protein>
<accession>A1UHS7</accession>
<reference key="1">
    <citation type="submission" date="2006-12" db="EMBL/GenBank/DDBJ databases">
        <title>Complete sequence of chromosome of Mycobacterium sp. KMS.</title>
        <authorList>
            <consortium name="US DOE Joint Genome Institute"/>
            <person name="Copeland A."/>
            <person name="Lucas S."/>
            <person name="Lapidus A."/>
            <person name="Barry K."/>
            <person name="Detter J.C."/>
            <person name="Glavina del Rio T."/>
            <person name="Hammon N."/>
            <person name="Israni S."/>
            <person name="Dalin E."/>
            <person name="Tice H."/>
            <person name="Pitluck S."/>
            <person name="Kiss H."/>
            <person name="Brettin T."/>
            <person name="Bruce D."/>
            <person name="Han C."/>
            <person name="Tapia R."/>
            <person name="Gilna P."/>
            <person name="Schmutz J."/>
            <person name="Larimer F."/>
            <person name="Land M."/>
            <person name="Hauser L."/>
            <person name="Kyrpides N."/>
            <person name="Mikhailova N."/>
            <person name="Miller C.D."/>
            <person name="Richardson P."/>
        </authorList>
    </citation>
    <scope>NUCLEOTIDE SEQUENCE [LARGE SCALE GENOMIC DNA]</scope>
    <source>
        <strain>KMS</strain>
    </source>
</reference>
<sequence>MTWPHFEQLAFPDLSRHSSHSTTRGVPSVPMDLSSFSDMLRRQAPHLLPFRGDASLTPTDAVPHGTTIVALKFPGGVVMAGDRRATQGNMIASRDVQKVYITDDYTATGIAGTAAIAVEFARLYAVELEHYEKLEGVALTFAGKVNRLATMVRGNLGAALQGFVALPLLAGFDLDDPDPQAAGRIVSFDAAGGHNLEEEGFQSVGSGSIFAKSSMKKLYHQVTDADSALRVAVEALYDAADDDSATGGPDLVRGIFPTAVLITADGAEEVTQERIAGLAREVIQNRSRADTFGPDAHAPRGTDS</sequence>
<dbReference type="EC" id="3.4.25.1" evidence="1"/>
<dbReference type="EMBL" id="CP000518">
    <property type="protein sequence ID" value="ABL92385.1"/>
    <property type="molecule type" value="Genomic_DNA"/>
</dbReference>
<dbReference type="SMR" id="A1UHS7"/>
<dbReference type="STRING" id="189918.Mkms_3191"/>
<dbReference type="MEROPS" id="T01.005"/>
<dbReference type="KEGG" id="mkm:Mkms_3191"/>
<dbReference type="HOGENOM" id="CLU_035750_2_0_11"/>
<dbReference type="OrthoDB" id="5174038at2"/>
<dbReference type="UniPathway" id="UPA00997"/>
<dbReference type="GO" id="GO:0005737">
    <property type="term" value="C:cytoplasm"/>
    <property type="evidence" value="ECO:0007669"/>
    <property type="project" value="UniProtKB-SubCell"/>
</dbReference>
<dbReference type="GO" id="GO:0019774">
    <property type="term" value="C:proteasome core complex, beta-subunit complex"/>
    <property type="evidence" value="ECO:0007669"/>
    <property type="project" value="UniProtKB-UniRule"/>
</dbReference>
<dbReference type="GO" id="GO:0004298">
    <property type="term" value="F:threonine-type endopeptidase activity"/>
    <property type="evidence" value="ECO:0007669"/>
    <property type="project" value="UniProtKB-UniRule"/>
</dbReference>
<dbReference type="GO" id="GO:0019941">
    <property type="term" value="P:modification-dependent protein catabolic process"/>
    <property type="evidence" value="ECO:0007669"/>
    <property type="project" value="UniProtKB-UniRule"/>
</dbReference>
<dbReference type="GO" id="GO:0010498">
    <property type="term" value="P:proteasomal protein catabolic process"/>
    <property type="evidence" value="ECO:0007669"/>
    <property type="project" value="UniProtKB-UniRule"/>
</dbReference>
<dbReference type="CDD" id="cd01906">
    <property type="entry name" value="proteasome_protease_HslV"/>
    <property type="match status" value="1"/>
</dbReference>
<dbReference type="FunFam" id="3.60.20.10:FF:000046">
    <property type="entry name" value="Proteasome subunit beta"/>
    <property type="match status" value="1"/>
</dbReference>
<dbReference type="Gene3D" id="3.60.20.10">
    <property type="entry name" value="Glutamine Phosphoribosylpyrophosphate, subunit 1, domain 1"/>
    <property type="match status" value="1"/>
</dbReference>
<dbReference type="HAMAP" id="MF_02113_B">
    <property type="entry name" value="Proteasome_B_B"/>
    <property type="match status" value="1"/>
</dbReference>
<dbReference type="InterPro" id="IPR029055">
    <property type="entry name" value="Ntn_hydrolases_N"/>
</dbReference>
<dbReference type="InterPro" id="IPR001353">
    <property type="entry name" value="Proteasome_sua/b"/>
</dbReference>
<dbReference type="InterPro" id="IPR023333">
    <property type="entry name" value="Proteasome_suB-type"/>
</dbReference>
<dbReference type="InterPro" id="IPR022483">
    <property type="entry name" value="PSB_actinobac"/>
</dbReference>
<dbReference type="NCBIfam" id="TIGR03690">
    <property type="entry name" value="20S_bact_beta"/>
    <property type="match status" value="1"/>
</dbReference>
<dbReference type="PANTHER" id="PTHR32194:SF0">
    <property type="entry name" value="ATP-DEPENDENT PROTEASE SUBUNIT HSLV"/>
    <property type="match status" value="1"/>
</dbReference>
<dbReference type="PANTHER" id="PTHR32194">
    <property type="entry name" value="METALLOPROTEASE TLDD"/>
    <property type="match status" value="1"/>
</dbReference>
<dbReference type="Pfam" id="PF00227">
    <property type="entry name" value="Proteasome"/>
    <property type="match status" value="1"/>
</dbReference>
<dbReference type="SUPFAM" id="SSF56235">
    <property type="entry name" value="N-terminal nucleophile aminohydrolases (Ntn hydrolases)"/>
    <property type="match status" value="1"/>
</dbReference>
<dbReference type="PROSITE" id="PS51476">
    <property type="entry name" value="PROTEASOME_BETA_2"/>
    <property type="match status" value="1"/>
</dbReference>